<evidence type="ECO:0000255" key="1">
    <source>
        <dbReference type="HAMAP-Rule" id="MF_03178"/>
    </source>
</evidence>
<protein>
    <recommendedName>
        <fullName evidence="1">NADPH-dependent diflavin oxidoreductase 1</fullName>
        <ecNumber evidence="1">1.18.1.-</ecNumber>
    </recommendedName>
    <alternativeName>
        <fullName evidence="1">NADPH-dependent FMN and FAD-containing oxidoreductase</fullName>
    </alternativeName>
</protein>
<keyword id="KW-0963">Cytoplasm</keyword>
<keyword id="KW-0274">FAD</keyword>
<keyword id="KW-0285">Flavoprotein</keyword>
<keyword id="KW-0288">FMN</keyword>
<keyword id="KW-0496">Mitochondrion</keyword>
<keyword id="KW-0521">NADP</keyword>
<keyword id="KW-0560">Oxidoreductase</keyword>
<keyword id="KW-1185">Reference proteome</keyword>
<comment type="function">
    <text evidence="1">NADPH-dependent reductase which is a central component of the cytosolic iron-sulfur (Fe-S) protein assembly (CIA) machinery. Transfers electrons from NADPH via its FAD and FMN prosthetic groups to the [2Fe-2S] cluster of DRE2, another key component of the CIA machinery. In turn, this reduced cluster provides electrons for assembly of cytosolic iron-sulfur cluster proteins. Positively controls H(2)O(2)-induced cell death.</text>
</comment>
<comment type="catalytic activity">
    <reaction evidence="1">
        <text>2 oxidized [2Fe-2S]-[protein] + NADPH = 2 reduced [2Fe-2S]-[protein] + NADP(+) + H(+)</text>
        <dbReference type="Rhea" id="RHEA:67716"/>
        <dbReference type="Rhea" id="RHEA-COMP:17327"/>
        <dbReference type="Rhea" id="RHEA-COMP:17328"/>
        <dbReference type="ChEBI" id="CHEBI:15378"/>
        <dbReference type="ChEBI" id="CHEBI:33737"/>
        <dbReference type="ChEBI" id="CHEBI:33738"/>
        <dbReference type="ChEBI" id="CHEBI:57783"/>
        <dbReference type="ChEBI" id="CHEBI:58349"/>
    </reaction>
    <physiologicalReaction direction="left-to-right" evidence="1">
        <dbReference type="Rhea" id="RHEA:67717"/>
    </physiologicalReaction>
</comment>
<comment type="cofactor">
    <cofactor evidence="1">
        <name>FAD</name>
        <dbReference type="ChEBI" id="CHEBI:57692"/>
    </cofactor>
</comment>
<comment type="cofactor">
    <cofactor evidence="1">
        <name>FMN</name>
        <dbReference type="ChEBI" id="CHEBI:58210"/>
    </cofactor>
</comment>
<comment type="subunit">
    <text evidence="1">Interacts with DRE2; as part of the cytosolic iron-sulfur (Fe-S) protein assembly (CIA) machinery.</text>
</comment>
<comment type="subcellular location">
    <subcellularLocation>
        <location evidence="1">Cytoplasm</location>
    </subcellularLocation>
    <subcellularLocation>
        <location evidence="1">Mitochondrion</location>
    </subcellularLocation>
    <text evidence="1">Relocalizes to mitochondria after H(2)O(2) exposure.</text>
</comment>
<comment type="similarity">
    <text evidence="1">Belongs to the NADPH-dependent diflavin oxidoreductase NDOR1 family.</text>
</comment>
<comment type="similarity">
    <text evidence="1">In the N-terminal section; belongs to the flavodoxin family.</text>
</comment>
<comment type="similarity">
    <text evidence="1">In the C-terminal section; belongs to the flavoprotein pyridine nucleotide cytochrome reductase family.</text>
</comment>
<feature type="chain" id="PRO_0000167614" description="NADPH-dependent diflavin oxidoreductase 1">
    <location>
        <begin position="1"/>
        <end position="589"/>
    </location>
</feature>
<feature type="domain" description="Flavodoxin-like" evidence="1">
    <location>
        <begin position="5"/>
        <end position="151"/>
    </location>
</feature>
<feature type="domain" description="FAD-binding FR-type" evidence="1">
    <location>
        <begin position="202"/>
        <end position="439"/>
    </location>
</feature>
<feature type="binding site" evidence="1">
    <location>
        <begin position="11"/>
        <end position="16"/>
    </location>
    <ligand>
        <name>FMN</name>
        <dbReference type="ChEBI" id="CHEBI:58210"/>
    </ligand>
</feature>
<feature type="binding site" evidence="1">
    <location>
        <begin position="60"/>
        <end position="63"/>
    </location>
    <ligand>
        <name>FMN</name>
        <dbReference type="ChEBI" id="CHEBI:58210"/>
    </ligand>
</feature>
<feature type="binding site" evidence="1">
    <location>
        <begin position="98"/>
        <end position="107"/>
    </location>
    <ligand>
        <name>FMN</name>
        <dbReference type="ChEBI" id="CHEBI:58210"/>
    </ligand>
</feature>
<feature type="binding site" evidence="1">
    <location>
        <position position="133"/>
    </location>
    <ligand>
        <name>FMN</name>
        <dbReference type="ChEBI" id="CHEBI:58210"/>
    </ligand>
</feature>
<feature type="binding site" evidence="1">
    <location>
        <position position="349"/>
    </location>
    <ligand>
        <name>FAD</name>
        <dbReference type="ChEBI" id="CHEBI:57692"/>
    </ligand>
</feature>
<feature type="binding site" evidence="1">
    <location>
        <begin position="380"/>
        <end position="383"/>
    </location>
    <ligand>
        <name>FAD</name>
        <dbReference type="ChEBI" id="CHEBI:57692"/>
    </ligand>
</feature>
<feature type="binding site" evidence="1">
    <location>
        <begin position="412"/>
        <end position="415"/>
    </location>
    <ligand>
        <name>FAD</name>
        <dbReference type="ChEBI" id="CHEBI:57692"/>
    </ligand>
</feature>
<feature type="binding site" evidence="1">
    <location>
        <position position="452"/>
    </location>
    <ligand>
        <name>NADP(+)</name>
        <dbReference type="ChEBI" id="CHEBI:58349"/>
    </ligand>
</feature>
<feature type="binding site" evidence="1">
    <location>
        <begin position="507"/>
        <end position="508"/>
    </location>
    <ligand>
        <name>NADP(+)</name>
        <dbReference type="ChEBI" id="CHEBI:58349"/>
    </ligand>
</feature>
<feature type="binding site" evidence="1">
    <location>
        <position position="589"/>
    </location>
    <ligand>
        <name>FAD</name>
        <dbReference type="ChEBI" id="CHEBI:57692"/>
    </ligand>
</feature>
<dbReference type="EC" id="1.18.1.-" evidence="1"/>
<dbReference type="EMBL" id="CP017624">
    <property type="protein sequence ID" value="AOW27136.1"/>
    <property type="molecule type" value="Genomic_DNA"/>
</dbReference>
<dbReference type="RefSeq" id="XP_719489.2">
    <property type="nucleotide sequence ID" value="XM_714396.2"/>
</dbReference>
<dbReference type="SMR" id="Q5AD27"/>
<dbReference type="FunCoup" id="Q5AD27">
    <property type="interactions" value="770"/>
</dbReference>
<dbReference type="STRING" id="237561.Q5AD27"/>
<dbReference type="EnsemblFungi" id="C2_00840W_A-T">
    <property type="protein sequence ID" value="C2_00840W_A-T-p1"/>
    <property type="gene ID" value="C2_00840W_A"/>
</dbReference>
<dbReference type="GeneID" id="3638807"/>
<dbReference type="KEGG" id="cal:CAALFM_C200840WA"/>
<dbReference type="CGD" id="CAL0000175936">
    <property type="gene designation" value="orf19.9588"/>
</dbReference>
<dbReference type="VEuPathDB" id="FungiDB:C2_00840W_A"/>
<dbReference type="eggNOG" id="KOG1159">
    <property type="taxonomic scope" value="Eukaryota"/>
</dbReference>
<dbReference type="HOGENOM" id="CLU_001570_17_6_1"/>
<dbReference type="InParanoid" id="Q5AD27"/>
<dbReference type="OrthoDB" id="1856718at2759"/>
<dbReference type="PRO" id="PR:Q5AD27"/>
<dbReference type="Proteomes" id="UP000000559">
    <property type="component" value="Chromosome 2"/>
</dbReference>
<dbReference type="GO" id="GO:0005829">
    <property type="term" value="C:cytosol"/>
    <property type="evidence" value="ECO:0000318"/>
    <property type="project" value="GO_Central"/>
</dbReference>
<dbReference type="GO" id="GO:0097361">
    <property type="term" value="C:cytosolic [4Fe-4S] assembly targeting complex"/>
    <property type="evidence" value="ECO:0007669"/>
    <property type="project" value="EnsemblFungi"/>
</dbReference>
<dbReference type="GO" id="GO:0005739">
    <property type="term" value="C:mitochondrion"/>
    <property type="evidence" value="ECO:0007669"/>
    <property type="project" value="UniProtKB-SubCell"/>
</dbReference>
<dbReference type="GO" id="GO:0050660">
    <property type="term" value="F:flavin adenine dinucleotide binding"/>
    <property type="evidence" value="ECO:0000318"/>
    <property type="project" value="GO_Central"/>
</dbReference>
<dbReference type="GO" id="GO:0010181">
    <property type="term" value="F:FMN binding"/>
    <property type="evidence" value="ECO:0000318"/>
    <property type="project" value="GO_Central"/>
</dbReference>
<dbReference type="GO" id="GO:0050661">
    <property type="term" value="F:NADP binding"/>
    <property type="evidence" value="ECO:0007669"/>
    <property type="project" value="UniProtKB-UniRule"/>
</dbReference>
<dbReference type="GO" id="GO:0003958">
    <property type="term" value="F:NADPH-hemoprotein reductase activity"/>
    <property type="evidence" value="ECO:0007669"/>
    <property type="project" value="InterPro"/>
</dbReference>
<dbReference type="GO" id="GO:0016491">
    <property type="term" value="F:oxidoreductase activity"/>
    <property type="evidence" value="ECO:0000318"/>
    <property type="project" value="GO_Central"/>
</dbReference>
<dbReference type="GO" id="GO:0034599">
    <property type="term" value="P:cellular response to oxidative stress"/>
    <property type="evidence" value="ECO:0007669"/>
    <property type="project" value="EnsemblFungi"/>
</dbReference>
<dbReference type="GO" id="GO:0016226">
    <property type="term" value="P:iron-sulfur cluster assembly"/>
    <property type="evidence" value="ECO:0007669"/>
    <property type="project" value="UniProtKB-UniRule"/>
</dbReference>
<dbReference type="GO" id="GO:0006809">
    <property type="term" value="P:nitric oxide biosynthetic process"/>
    <property type="evidence" value="ECO:0007669"/>
    <property type="project" value="EnsemblFungi"/>
</dbReference>
<dbReference type="GO" id="GO:0045429">
    <property type="term" value="P:positive regulation of nitric oxide biosynthetic process"/>
    <property type="evidence" value="ECO:0007669"/>
    <property type="project" value="EnsemblFungi"/>
</dbReference>
<dbReference type="FunFam" id="1.20.990.10:FF:000008">
    <property type="entry name" value="NADPH-dependent diflavin oxidoreductase 1"/>
    <property type="match status" value="1"/>
</dbReference>
<dbReference type="FunFam" id="3.40.50.80:FF:000030">
    <property type="entry name" value="NADPH-dependent diflavin oxidoreductase 1"/>
    <property type="match status" value="1"/>
</dbReference>
<dbReference type="Gene3D" id="3.40.50.360">
    <property type="match status" value="1"/>
</dbReference>
<dbReference type="Gene3D" id="1.20.990.10">
    <property type="entry name" value="NADPH-cytochrome p450 Reductase, Chain A, domain 3"/>
    <property type="match status" value="1"/>
</dbReference>
<dbReference type="Gene3D" id="3.40.50.80">
    <property type="entry name" value="Nucleotide-binding domain of ferredoxin-NADP reductase (FNR) module"/>
    <property type="match status" value="1"/>
</dbReference>
<dbReference type="Gene3D" id="2.40.30.10">
    <property type="entry name" value="Translation factors"/>
    <property type="match status" value="1"/>
</dbReference>
<dbReference type="HAMAP" id="MF_03178">
    <property type="entry name" value="NDOR1"/>
    <property type="match status" value="1"/>
</dbReference>
<dbReference type="InterPro" id="IPR003097">
    <property type="entry name" value="CysJ-like_FAD-binding"/>
</dbReference>
<dbReference type="InterPro" id="IPR017927">
    <property type="entry name" value="FAD-bd_FR_type"/>
</dbReference>
<dbReference type="InterPro" id="IPR001094">
    <property type="entry name" value="Flavdoxin-like"/>
</dbReference>
<dbReference type="InterPro" id="IPR008254">
    <property type="entry name" value="Flavodoxin/NO_synth"/>
</dbReference>
<dbReference type="InterPro" id="IPR001709">
    <property type="entry name" value="Flavoprot_Pyr_Nucl_cyt_Rdtase"/>
</dbReference>
<dbReference type="InterPro" id="IPR029039">
    <property type="entry name" value="Flavoprotein-like_sf"/>
</dbReference>
<dbReference type="InterPro" id="IPR039261">
    <property type="entry name" value="FNR_nucleotide-bd"/>
</dbReference>
<dbReference type="InterPro" id="IPR023173">
    <property type="entry name" value="NADPH_Cyt_P450_Rdtase_alpha"/>
</dbReference>
<dbReference type="InterPro" id="IPR028879">
    <property type="entry name" value="NDOR1"/>
</dbReference>
<dbReference type="InterPro" id="IPR001433">
    <property type="entry name" value="OxRdtase_FAD/NAD-bd"/>
</dbReference>
<dbReference type="InterPro" id="IPR017938">
    <property type="entry name" value="Riboflavin_synthase-like_b-brl"/>
</dbReference>
<dbReference type="PANTHER" id="PTHR19384:SF10">
    <property type="entry name" value="NADPH-DEPENDENT DIFLAVIN OXIDOREDUCTASE 1"/>
    <property type="match status" value="1"/>
</dbReference>
<dbReference type="PANTHER" id="PTHR19384">
    <property type="entry name" value="NITRIC OXIDE SYNTHASE-RELATED"/>
    <property type="match status" value="1"/>
</dbReference>
<dbReference type="Pfam" id="PF00667">
    <property type="entry name" value="FAD_binding_1"/>
    <property type="match status" value="1"/>
</dbReference>
<dbReference type="Pfam" id="PF00258">
    <property type="entry name" value="Flavodoxin_1"/>
    <property type="match status" value="1"/>
</dbReference>
<dbReference type="Pfam" id="PF00175">
    <property type="entry name" value="NAD_binding_1"/>
    <property type="match status" value="1"/>
</dbReference>
<dbReference type="PRINTS" id="PR00369">
    <property type="entry name" value="FLAVODOXIN"/>
</dbReference>
<dbReference type="PRINTS" id="PR00371">
    <property type="entry name" value="FPNCR"/>
</dbReference>
<dbReference type="SUPFAM" id="SSF52343">
    <property type="entry name" value="Ferredoxin reductase-like, C-terminal NADP-linked domain"/>
    <property type="match status" value="1"/>
</dbReference>
<dbReference type="SUPFAM" id="SSF52218">
    <property type="entry name" value="Flavoproteins"/>
    <property type="match status" value="1"/>
</dbReference>
<dbReference type="SUPFAM" id="SSF63380">
    <property type="entry name" value="Riboflavin synthase domain-like"/>
    <property type="match status" value="1"/>
</dbReference>
<dbReference type="PROSITE" id="PS51384">
    <property type="entry name" value="FAD_FR"/>
    <property type="match status" value="1"/>
</dbReference>
<dbReference type="PROSITE" id="PS50902">
    <property type="entry name" value="FLAVODOXIN_LIKE"/>
    <property type="match status" value="1"/>
</dbReference>
<gene>
    <name evidence="1" type="primary">TAH18</name>
    <name type="ordered locus">CAALFM_C200840WA</name>
    <name type="ORF">CaO19.2040</name>
    <name type="ORF">CaO19.9588</name>
</gene>
<name>NDOR1_CANAL</name>
<organism>
    <name type="scientific">Candida albicans (strain SC5314 / ATCC MYA-2876)</name>
    <name type="common">Yeast</name>
    <dbReference type="NCBI Taxonomy" id="237561"/>
    <lineage>
        <taxon>Eukaryota</taxon>
        <taxon>Fungi</taxon>
        <taxon>Dikarya</taxon>
        <taxon>Ascomycota</taxon>
        <taxon>Saccharomycotina</taxon>
        <taxon>Pichiomycetes</taxon>
        <taxon>Debaryomycetaceae</taxon>
        <taxon>Candida/Lodderomyces clade</taxon>
        <taxon>Candida</taxon>
    </lineage>
</organism>
<reference key="1">
    <citation type="journal article" date="2004" name="Proc. Natl. Acad. Sci. U.S.A.">
        <title>The diploid genome sequence of Candida albicans.</title>
        <authorList>
            <person name="Jones T."/>
            <person name="Federspiel N.A."/>
            <person name="Chibana H."/>
            <person name="Dungan J."/>
            <person name="Kalman S."/>
            <person name="Magee B.B."/>
            <person name="Newport G."/>
            <person name="Thorstenson Y.R."/>
            <person name="Agabian N."/>
            <person name="Magee P.T."/>
            <person name="Davis R.W."/>
            <person name="Scherer S."/>
        </authorList>
    </citation>
    <scope>NUCLEOTIDE SEQUENCE [LARGE SCALE GENOMIC DNA]</scope>
    <source>
        <strain>SC5314 / ATCC MYA-2876</strain>
    </source>
</reference>
<reference key="2">
    <citation type="journal article" date="2007" name="Genome Biol.">
        <title>Assembly of the Candida albicans genome into sixteen supercontigs aligned on the eight chromosomes.</title>
        <authorList>
            <person name="van het Hoog M."/>
            <person name="Rast T.J."/>
            <person name="Martchenko M."/>
            <person name="Grindle S."/>
            <person name="Dignard D."/>
            <person name="Hogues H."/>
            <person name="Cuomo C."/>
            <person name="Berriman M."/>
            <person name="Scherer S."/>
            <person name="Magee B.B."/>
            <person name="Whiteway M."/>
            <person name="Chibana H."/>
            <person name="Nantel A."/>
            <person name="Magee P.T."/>
        </authorList>
    </citation>
    <scope>GENOME REANNOTATION</scope>
    <source>
        <strain>SC5314 / ATCC MYA-2876</strain>
    </source>
</reference>
<reference key="3">
    <citation type="journal article" date="2013" name="Genome Biol.">
        <title>Assembly of a phased diploid Candida albicans genome facilitates allele-specific measurements and provides a simple model for repeat and indel structure.</title>
        <authorList>
            <person name="Muzzey D."/>
            <person name="Schwartz K."/>
            <person name="Weissman J.S."/>
            <person name="Sherlock G."/>
        </authorList>
    </citation>
    <scope>NUCLEOTIDE SEQUENCE [LARGE SCALE GENOMIC DNA]</scope>
    <scope>GENOME REANNOTATION</scope>
    <source>
        <strain>SC5314 / ATCC MYA-2876</strain>
    </source>
</reference>
<proteinExistence type="inferred from homology"/>
<accession>Q5AD27</accession>
<accession>A0A1D8PG74</accession>
<sequence length="589" mass="67441">MTGEITILYGSETGNAEEYAKYLKQRLRSYNLKPINLASLDDYPLKRLVTHTSYLIIICSTTGQGEIPRNGKKFMKFILKKKLPSDLFQHLQLTTFGVGDSSYVKYNYAIKKIHTRLMQLGCQLLSPRCEADEISPEGVDGYYIEWEAELIAALLNKFPSASKISSEAVPMPEYRISVSKSDTTIDPKEVIDNPIVSRLGKDGLKLGTVLENNRLTSSNHFQDVRDFKFSSNGLNYLPGDTVSLFPCNFDEDVDALLQSQPQWLKIADKPLNLKNFPHLEGGFADILTLRTLFKYHLDIMSIPRRSFFALLWHFVDPSTEDGEREQEKLKEFGSLDEPEELYDYANRPRRSILETLLEFENNLTIPVSYILDLFPLIRPRMFSIASCPSSKEVELVVAIVEYKTIIRKIRRGVCTRWLKNLKPGDQFLFSIQRSSFKYKDDNSPIIMVAPGTGIAPMKSLIDEVIQNNSKQELYLFFGCRFKEKDNLIESFWHGNENQNLHLVSAYSRDSNSKYRYVQDALFAHSELIGKLLIEQNAKVFVCGSSGKMPREVKITFVEIVKKFTGMDEGDAQKYIIGLEDNGRYKEDAW</sequence>